<proteinExistence type="inferred from homology"/>
<gene>
    <name evidence="1" type="primary">rnc</name>
    <name type="ordered locus">Dshi_0200</name>
</gene>
<name>RNC_DINSH</name>
<organism>
    <name type="scientific">Dinoroseobacter shibae (strain DSM 16493 / NCIMB 14021 / DFL 12)</name>
    <dbReference type="NCBI Taxonomy" id="398580"/>
    <lineage>
        <taxon>Bacteria</taxon>
        <taxon>Pseudomonadati</taxon>
        <taxon>Pseudomonadota</taxon>
        <taxon>Alphaproteobacteria</taxon>
        <taxon>Rhodobacterales</taxon>
        <taxon>Roseobacteraceae</taxon>
        <taxon>Dinoroseobacter</taxon>
    </lineage>
</organism>
<protein>
    <recommendedName>
        <fullName evidence="1">Ribonuclease 3</fullName>
        <ecNumber evidence="1">3.1.26.3</ecNumber>
    </recommendedName>
    <alternativeName>
        <fullName evidence="1">Ribonuclease III</fullName>
        <shortName evidence="1">RNase III</shortName>
    </alternativeName>
</protein>
<sequence>MKLSKEISAFCDRIGHRFDRPELLVRALTHASRSTAGRSDNQRLEFLGDRVLGLVMAEALLEADPQAREGQLAPRYNALVRKETCAEVAREIGLGDVLRLGRSEMLTGGRRKDALLGDGMEAVIAAVYRDAGFEAAKALILRLWGKRIGAVEADARDPKTALQEWAQARGLPPPAYIESARSGPDHAPVFTISARLETGACAEAQAGSKRQAEQAAAKALLAQVESNHD</sequence>
<dbReference type="EC" id="3.1.26.3" evidence="1"/>
<dbReference type="EMBL" id="CP000830">
    <property type="protein sequence ID" value="ABV91949.1"/>
    <property type="molecule type" value="Genomic_DNA"/>
</dbReference>
<dbReference type="RefSeq" id="WP_012176882.1">
    <property type="nucleotide sequence ID" value="NC_009952.1"/>
</dbReference>
<dbReference type="SMR" id="A8LLD9"/>
<dbReference type="STRING" id="398580.Dshi_0200"/>
<dbReference type="KEGG" id="dsh:Dshi_0200"/>
<dbReference type="eggNOG" id="COG0571">
    <property type="taxonomic scope" value="Bacteria"/>
</dbReference>
<dbReference type="HOGENOM" id="CLU_000907_1_1_5"/>
<dbReference type="OrthoDB" id="9805026at2"/>
<dbReference type="Proteomes" id="UP000006833">
    <property type="component" value="Chromosome"/>
</dbReference>
<dbReference type="GO" id="GO:0005737">
    <property type="term" value="C:cytoplasm"/>
    <property type="evidence" value="ECO:0007669"/>
    <property type="project" value="UniProtKB-SubCell"/>
</dbReference>
<dbReference type="GO" id="GO:0003725">
    <property type="term" value="F:double-stranded RNA binding"/>
    <property type="evidence" value="ECO:0007669"/>
    <property type="project" value="TreeGrafter"/>
</dbReference>
<dbReference type="GO" id="GO:0046872">
    <property type="term" value="F:metal ion binding"/>
    <property type="evidence" value="ECO:0007669"/>
    <property type="project" value="UniProtKB-KW"/>
</dbReference>
<dbReference type="GO" id="GO:0004525">
    <property type="term" value="F:ribonuclease III activity"/>
    <property type="evidence" value="ECO:0007669"/>
    <property type="project" value="UniProtKB-UniRule"/>
</dbReference>
<dbReference type="GO" id="GO:0019843">
    <property type="term" value="F:rRNA binding"/>
    <property type="evidence" value="ECO:0007669"/>
    <property type="project" value="UniProtKB-KW"/>
</dbReference>
<dbReference type="GO" id="GO:0006397">
    <property type="term" value="P:mRNA processing"/>
    <property type="evidence" value="ECO:0007669"/>
    <property type="project" value="UniProtKB-UniRule"/>
</dbReference>
<dbReference type="GO" id="GO:0010468">
    <property type="term" value="P:regulation of gene expression"/>
    <property type="evidence" value="ECO:0007669"/>
    <property type="project" value="TreeGrafter"/>
</dbReference>
<dbReference type="GO" id="GO:0006364">
    <property type="term" value="P:rRNA processing"/>
    <property type="evidence" value="ECO:0007669"/>
    <property type="project" value="UniProtKB-UniRule"/>
</dbReference>
<dbReference type="GO" id="GO:0008033">
    <property type="term" value="P:tRNA processing"/>
    <property type="evidence" value="ECO:0007669"/>
    <property type="project" value="UniProtKB-KW"/>
</dbReference>
<dbReference type="CDD" id="cd10845">
    <property type="entry name" value="DSRM_RNAse_III_family"/>
    <property type="match status" value="1"/>
</dbReference>
<dbReference type="CDD" id="cd00593">
    <property type="entry name" value="RIBOc"/>
    <property type="match status" value="1"/>
</dbReference>
<dbReference type="FunFam" id="1.10.1520.10:FF:000001">
    <property type="entry name" value="Ribonuclease 3"/>
    <property type="match status" value="1"/>
</dbReference>
<dbReference type="Gene3D" id="3.30.160.20">
    <property type="match status" value="1"/>
</dbReference>
<dbReference type="Gene3D" id="1.10.1520.10">
    <property type="entry name" value="Ribonuclease III domain"/>
    <property type="match status" value="1"/>
</dbReference>
<dbReference type="HAMAP" id="MF_00104">
    <property type="entry name" value="RNase_III"/>
    <property type="match status" value="1"/>
</dbReference>
<dbReference type="InterPro" id="IPR014720">
    <property type="entry name" value="dsRBD_dom"/>
</dbReference>
<dbReference type="InterPro" id="IPR011907">
    <property type="entry name" value="RNase_III"/>
</dbReference>
<dbReference type="InterPro" id="IPR000999">
    <property type="entry name" value="RNase_III_dom"/>
</dbReference>
<dbReference type="InterPro" id="IPR036389">
    <property type="entry name" value="RNase_III_sf"/>
</dbReference>
<dbReference type="NCBIfam" id="TIGR02191">
    <property type="entry name" value="RNaseIII"/>
    <property type="match status" value="1"/>
</dbReference>
<dbReference type="PANTHER" id="PTHR11207:SF0">
    <property type="entry name" value="RIBONUCLEASE 3"/>
    <property type="match status" value="1"/>
</dbReference>
<dbReference type="PANTHER" id="PTHR11207">
    <property type="entry name" value="RIBONUCLEASE III"/>
    <property type="match status" value="1"/>
</dbReference>
<dbReference type="Pfam" id="PF00035">
    <property type="entry name" value="dsrm"/>
    <property type="match status" value="1"/>
</dbReference>
<dbReference type="Pfam" id="PF14622">
    <property type="entry name" value="Ribonucleas_3_3"/>
    <property type="match status" value="1"/>
</dbReference>
<dbReference type="SMART" id="SM00358">
    <property type="entry name" value="DSRM"/>
    <property type="match status" value="1"/>
</dbReference>
<dbReference type="SMART" id="SM00535">
    <property type="entry name" value="RIBOc"/>
    <property type="match status" value="1"/>
</dbReference>
<dbReference type="SUPFAM" id="SSF54768">
    <property type="entry name" value="dsRNA-binding domain-like"/>
    <property type="match status" value="1"/>
</dbReference>
<dbReference type="SUPFAM" id="SSF69065">
    <property type="entry name" value="RNase III domain-like"/>
    <property type="match status" value="1"/>
</dbReference>
<dbReference type="PROSITE" id="PS50137">
    <property type="entry name" value="DS_RBD"/>
    <property type="match status" value="1"/>
</dbReference>
<dbReference type="PROSITE" id="PS00517">
    <property type="entry name" value="RNASE_3_1"/>
    <property type="match status" value="1"/>
</dbReference>
<dbReference type="PROSITE" id="PS50142">
    <property type="entry name" value="RNASE_3_2"/>
    <property type="match status" value="1"/>
</dbReference>
<reference key="1">
    <citation type="journal article" date="2010" name="ISME J.">
        <title>The complete genome sequence of the algal symbiont Dinoroseobacter shibae: a hitchhiker's guide to life in the sea.</title>
        <authorList>
            <person name="Wagner-Dobler I."/>
            <person name="Ballhausen B."/>
            <person name="Berger M."/>
            <person name="Brinkhoff T."/>
            <person name="Buchholz I."/>
            <person name="Bunk B."/>
            <person name="Cypionka H."/>
            <person name="Daniel R."/>
            <person name="Drepper T."/>
            <person name="Gerdts G."/>
            <person name="Hahnke S."/>
            <person name="Han C."/>
            <person name="Jahn D."/>
            <person name="Kalhoefer D."/>
            <person name="Kiss H."/>
            <person name="Klenk H.P."/>
            <person name="Kyrpides N."/>
            <person name="Liebl W."/>
            <person name="Liesegang H."/>
            <person name="Meincke L."/>
            <person name="Pati A."/>
            <person name="Petersen J."/>
            <person name="Piekarski T."/>
            <person name="Pommerenke C."/>
            <person name="Pradella S."/>
            <person name="Pukall R."/>
            <person name="Rabus R."/>
            <person name="Stackebrandt E."/>
            <person name="Thole S."/>
            <person name="Thompson L."/>
            <person name="Tielen P."/>
            <person name="Tomasch J."/>
            <person name="von Jan M."/>
            <person name="Wanphrut N."/>
            <person name="Wichels A."/>
            <person name="Zech H."/>
            <person name="Simon M."/>
        </authorList>
    </citation>
    <scope>NUCLEOTIDE SEQUENCE [LARGE SCALE GENOMIC DNA]</scope>
    <source>
        <strain>DSM 16493 / NCIMB 14021 / DFL 12</strain>
    </source>
</reference>
<feature type="chain" id="PRO_1000075744" description="Ribonuclease 3">
    <location>
        <begin position="1"/>
        <end position="229"/>
    </location>
</feature>
<feature type="domain" description="RNase III" evidence="1">
    <location>
        <begin position="7"/>
        <end position="132"/>
    </location>
</feature>
<feature type="domain" description="DRBM" evidence="1">
    <location>
        <begin position="157"/>
        <end position="226"/>
    </location>
</feature>
<feature type="active site" evidence="1">
    <location>
        <position position="49"/>
    </location>
</feature>
<feature type="active site" evidence="1">
    <location>
        <position position="121"/>
    </location>
</feature>
<feature type="binding site" evidence="1">
    <location>
        <position position="45"/>
    </location>
    <ligand>
        <name>Mg(2+)</name>
        <dbReference type="ChEBI" id="CHEBI:18420"/>
    </ligand>
</feature>
<feature type="binding site" evidence="1">
    <location>
        <position position="118"/>
    </location>
    <ligand>
        <name>Mg(2+)</name>
        <dbReference type="ChEBI" id="CHEBI:18420"/>
    </ligand>
</feature>
<feature type="binding site" evidence="1">
    <location>
        <position position="121"/>
    </location>
    <ligand>
        <name>Mg(2+)</name>
        <dbReference type="ChEBI" id="CHEBI:18420"/>
    </ligand>
</feature>
<keyword id="KW-0963">Cytoplasm</keyword>
<keyword id="KW-0255">Endonuclease</keyword>
<keyword id="KW-0378">Hydrolase</keyword>
<keyword id="KW-0460">Magnesium</keyword>
<keyword id="KW-0479">Metal-binding</keyword>
<keyword id="KW-0507">mRNA processing</keyword>
<keyword id="KW-0540">Nuclease</keyword>
<keyword id="KW-1185">Reference proteome</keyword>
<keyword id="KW-0694">RNA-binding</keyword>
<keyword id="KW-0698">rRNA processing</keyword>
<keyword id="KW-0699">rRNA-binding</keyword>
<keyword id="KW-0819">tRNA processing</keyword>
<comment type="function">
    <text evidence="1">Digests double-stranded RNA. Involved in the processing of primary rRNA transcript to yield the immediate precursors to the large and small rRNAs (23S and 16S). Processes some mRNAs, and tRNAs when they are encoded in the rRNA operon. Processes pre-crRNA and tracrRNA of type II CRISPR loci if present in the organism.</text>
</comment>
<comment type="catalytic activity">
    <reaction evidence="1">
        <text>Endonucleolytic cleavage to 5'-phosphomonoester.</text>
        <dbReference type="EC" id="3.1.26.3"/>
    </reaction>
</comment>
<comment type="cofactor">
    <cofactor evidence="1">
        <name>Mg(2+)</name>
        <dbReference type="ChEBI" id="CHEBI:18420"/>
    </cofactor>
</comment>
<comment type="subunit">
    <text evidence="1">Homodimer.</text>
</comment>
<comment type="subcellular location">
    <subcellularLocation>
        <location evidence="1">Cytoplasm</location>
    </subcellularLocation>
</comment>
<comment type="similarity">
    <text evidence="1">Belongs to the ribonuclease III family.</text>
</comment>
<accession>A8LLD9</accession>
<evidence type="ECO:0000255" key="1">
    <source>
        <dbReference type="HAMAP-Rule" id="MF_00104"/>
    </source>
</evidence>